<comment type="similarity">
    <text evidence="2">Belongs to the acetyltransferase family.</text>
</comment>
<name>YOAA_BACSU</name>
<gene>
    <name type="primary">yoaA</name>
    <name type="ordered locus">BSU18530</name>
</gene>
<feature type="chain" id="PRO_0000360211" description="Uncharacterized N-acetyltransferase YoaA">
    <location>
        <begin position="1"/>
        <end position="177"/>
    </location>
</feature>
<feature type="domain" description="N-acetyltransferase" evidence="1">
    <location>
        <begin position="10"/>
        <end position="177"/>
    </location>
</feature>
<feature type="sequence conflict" description="In Ref. 1; AAB84419." evidence="2" ref="1">
    <original>QNGTPYDTNVYSIVKPRE</original>
    <variation>SKWDSI</variation>
    <location>
        <begin position="160"/>
        <end position="177"/>
    </location>
</feature>
<dbReference type="EC" id="2.3.1.-"/>
<dbReference type="EMBL" id="AF027868">
    <property type="protein sequence ID" value="AAB84419.1"/>
    <property type="molecule type" value="Genomic_DNA"/>
</dbReference>
<dbReference type="EMBL" id="AL009126">
    <property type="protein sequence ID" value="CAB13746.2"/>
    <property type="molecule type" value="Genomic_DNA"/>
</dbReference>
<dbReference type="PIR" id="C69895">
    <property type="entry name" value="C69895"/>
</dbReference>
<dbReference type="RefSeq" id="NP_389735.2">
    <property type="nucleotide sequence ID" value="NC_000964.3"/>
</dbReference>
<dbReference type="RefSeq" id="WP_003231441.1">
    <property type="nucleotide sequence ID" value="NZ_OZ025638.1"/>
</dbReference>
<dbReference type="SMR" id="O34569"/>
<dbReference type="FunCoup" id="O34569">
    <property type="interactions" value="60"/>
</dbReference>
<dbReference type="STRING" id="224308.BSU18530"/>
<dbReference type="PaxDb" id="224308-BSU18530"/>
<dbReference type="EnsemblBacteria" id="CAB13746">
    <property type="protein sequence ID" value="CAB13746"/>
    <property type="gene ID" value="BSU_18530"/>
</dbReference>
<dbReference type="GeneID" id="940097"/>
<dbReference type="KEGG" id="bsu:BSU18530"/>
<dbReference type="PATRIC" id="fig|224308.179.peg.2020"/>
<dbReference type="eggNOG" id="COG1670">
    <property type="taxonomic scope" value="Bacteria"/>
</dbReference>
<dbReference type="InParanoid" id="O34569"/>
<dbReference type="OrthoDB" id="9811523at2"/>
<dbReference type="PhylomeDB" id="O34569"/>
<dbReference type="BioCyc" id="BSUB:BSU18530-MONOMER"/>
<dbReference type="Proteomes" id="UP000001570">
    <property type="component" value="Chromosome"/>
</dbReference>
<dbReference type="GO" id="GO:0005737">
    <property type="term" value="C:cytoplasm"/>
    <property type="evidence" value="ECO:0000318"/>
    <property type="project" value="GO_Central"/>
</dbReference>
<dbReference type="GO" id="GO:0008999">
    <property type="term" value="F:protein-N-terminal-alanine acetyltransferase activity"/>
    <property type="evidence" value="ECO:0000318"/>
    <property type="project" value="GO_Central"/>
</dbReference>
<dbReference type="Gene3D" id="3.40.630.30">
    <property type="match status" value="1"/>
</dbReference>
<dbReference type="InterPro" id="IPR016181">
    <property type="entry name" value="Acyl_CoA_acyltransferase"/>
</dbReference>
<dbReference type="InterPro" id="IPR000182">
    <property type="entry name" value="GNAT_dom"/>
</dbReference>
<dbReference type="InterPro" id="IPR051531">
    <property type="entry name" value="N-acetyltransferase"/>
</dbReference>
<dbReference type="PANTHER" id="PTHR43792">
    <property type="entry name" value="GNAT FAMILY, PUTATIVE (AFU_ORTHOLOGUE AFUA_3G00765)-RELATED-RELATED"/>
    <property type="match status" value="1"/>
</dbReference>
<dbReference type="PANTHER" id="PTHR43792:SF9">
    <property type="entry name" value="RIBOSOMAL-PROTEIN-ALANINE ACETYLTRANSFERASE"/>
    <property type="match status" value="1"/>
</dbReference>
<dbReference type="Pfam" id="PF13302">
    <property type="entry name" value="Acetyltransf_3"/>
    <property type="match status" value="1"/>
</dbReference>
<dbReference type="SUPFAM" id="SSF55729">
    <property type="entry name" value="Acyl-CoA N-acyltransferases (Nat)"/>
    <property type="match status" value="1"/>
</dbReference>
<dbReference type="PROSITE" id="PS51186">
    <property type="entry name" value="GNAT"/>
    <property type="match status" value="1"/>
</dbReference>
<accession>O34569</accession>
<accession>Q796G2</accession>
<protein>
    <recommendedName>
        <fullName>Uncharacterized N-acetyltransferase YoaA</fullName>
        <ecNumber>2.3.1.-</ecNumber>
    </recommendedName>
</protein>
<organism>
    <name type="scientific">Bacillus subtilis (strain 168)</name>
    <dbReference type="NCBI Taxonomy" id="224308"/>
    <lineage>
        <taxon>Bacteria</taxon>
        <taxon>Bacillati</taxon>
        <taxon>Bacillota</taxon>
        <taxon>Bacilli</taxon>
        <taxon>Bacillales</taxon>
        <taxon>Bacillaceae</taxon>
        <taxon>Bacillus</taxon>
    </lineage>
</organism>
<reference key="1">
    <citation type="submission" date="1997-11" db="EMBL/GenBank/DDBJ databases">
        <title>Sequence analysis of the Bacillus subtilis chromosome region between the terC and odhAB loci cloned in a yeast artificial chromosome.</title>
        <authorList>
            <person name="Lapidus A."/>
            <person name="Galleron N."/>
            <person name="Sorokin A."/>
            <person name="Ehrlich S.D."/>
        </authorList>
    </citation>
    <scope>NUCLEOTIDE SEQUENCE [GENOMIC DNA]</scope>
</reference>
<reference key="2">
    <citation type="journal article" date="1997" name="Nature">
        <title>The complete genome sequence of the Gram-positive bacterium Bacillus subtilis.</title>
        <authorList>
            <person name="Kunst F."/>
            <person name="Ogasawara N."/>
            <person name="Moszer I."/>
            <person name="Albertini A.M."/>
            <person name="Alloni G."/>
            <person name="Azevedo V."/>
            <person name="Bertero M.G."/>
            <person name="Bessieres P."/>
            <person name="Bolotin A."/>
            <person name="Borchert S."/>
            <person name="Borriss R."/>
            <person name="Boursier L."/>
            <person name="Brans A."/>
            <person name="Braun M."/>
            <person name="Brignell S.C."/>
            <person name="Bron S."/>
            <person name="Brouillet S."/>
            <person name="Bruschi C.V."/>
            <person name="Caldwell B."/>
            <person name="Capuano V."/>
            <person name="Carter N.M."/>
            <person name="Choi S.-K."/>
            <person name="Codani J.-J."/>
            <person name="Connerton I.F."/>
            <person name="Cummings N.J."/>
            <person name="Daniel R.A."/>
            <person name="Denizot F."/>
            <person name="Devine K.M."/>
            <person name="Duesterhoeft A."/>
            <person name="Ehrlich S.D."/>
            <person name="Emmerson P.T."/>
            <person name="Entian K.-D."/>
            <person name="Errington J."/>
            <person name="Fabret C."/>
            <person name="Ferrari E."/>
            <person name="Foulger D."/>
            <person name="Fritz C."/>
            <person name="Fujita M."/>
            <person name="Fujita Y."/>
            <person name="Fuma S."/>
            <person name="Galizzi A."/>
            <person name="Galleron N."/>
            <person name="Ghim S.-Y."/>
            <person name="Glaser P."/>
            <person name="Goffeau A."/>
            <person name="Golightly E.J."/>
            <person name="Grandi G."/>
            <person name="Guiseppi G."/>
            <person name="Guy B.J."/>
            <person name="Haga K."/>
            <person name="Haiech J."/>
            <person name="Harwood C.R."/>
            <person name="Henaut A."/>
            <person name="Hilbert H."/>
            <person name="Holsappel S."/>
            <person name="Hosono S."/>
            <person name="Hullo M.-F."/>
            <person name="Itaya M."/>
            <person name="Jones L.-M."/>
            <person name="Joris B."/>
            <person name="Karamata D."/>
            <person name="Kasahara Y."/>
            <person name="Klaerr-Blanchard M."/>
            <person name="Klein C."/>
            <person name="Kobayashi Y."/>
            <person name="Koetter P."/>
            <person name="Koningstein G."/>
            <person name="Krogh S."/>
            <person name="Kumano M."/>
            <person name="Kurita K."/>
            <person name="Lapidus A."/>
            <person name="Lardinois S."/>
            <person name="Lauber J."/>
            <person name="Lazarevic V."/>
            <person name="Lee S.-M."/>
            <person name="Levine A."/>
            <person name="Liu H."/>
            <person name="Masuda S."/>
            <person name="Mauel C."/>
            <person name="Medigue C."/>
            <person name="Medina N."/>
            <person name="Mellado R.P."/>
            <person name="Mizuno M."/>
            <person name="Moestl D."/>
            <person name="Nakai S."/>
            <person name="Noback M."/>
            <person name="Noone D."/>
            <person name="O'Reilly M."/>
            <person name="Ogawa K."/>
            <person name="Ogiwara A."/>
            <person name="Oudega B."/>
            <person name="Park S.-H."/>
            <person name="Parro V."/>
            <person name="Pohl T.M."/>
            <person name="Portetelle D."/>
            <person name="Porwollik S."/>
            <person name="Prescott A.M."/>
            <person name="Presecan E."/>
            <person name="Pujic P."/>
            <person name="Purnelle B."/>
            <person name="Rapoport G."/>
            <person name="Rey M."/>
            <person name="Reynolds S."/>
            <person name="Rieger M."/>
            <person name="Rivolta C."/>
            <person name="Rocha E."/>
            <person name="Roche B."/>
            <person name="Rose M."/>
            <person name="Sadaie Y."/>
            <person name="Sato T."/>
            <person name="Scanlan E."/>
            <person name="Schleich S."/>
            <person name="Schroeter R."/>
            <person name="Scoffone F."/>
            <person name="Sekiguchi J."/>
            <person name="Sekowska A."/>
            <person name="Seror S.J."/>
            <person name="Serror P."/>
            <person name="Shin B.-S."/>
            <person name="Soldo B."/>
            <person name="Sorokin A."/>
            <person name="Tacconi E."/>
            <person name="Takagi T."/>
            <person name="Takahashi H."/>
            <person name="Takemaru K."/>
            <person name="Takeuchi M."/>
            <person name="Tamakoshi A."/>
            <person name="Tanaka T."/>
            <person name="Terpstra P."/>
            <person name="Tognoni A."/>
            <person name="Tosato V."/>
            <person name="Uchiyama S."/>
            <person name="Vandenbol M."/>
            <person name="Vannier F."/>
            <person name="Vassarotti A."/>
            <person name="Viari A."/>
            <person name="Wambutt R."/>
            <person name="Wedler E."/>
            <person name="Wedler H."/>
            <person name="Weitzenegger T."/>
            <person name="Winters P."/>
            <person name="Wipat A."/>
            <person name="Yamamoto H."/>
            <person name="Yamane K."/>
            <person name="Yasumoto K."/>
            <person name="Yata K."/>
            <person name="Yoshida K."/>
            <person name="Yoshikawa H.-F."/>
            <person name="Zumstein E."/>
            <person name="Yoshikawa H."/>
            <person name="Danchin A."/>
        </authorList>
    </citation>
    <scope>NUCLEOTIDE SEQUENCE [LARGE SCALE GENOMIC DNA]</scope>
    <source>
        <strain>168</strain>
    </source>
</reference>
<reference key="3">
    <citation type="journal article" date="2009" name="Microbiology">
        <title>From a consortium sequence to a unified sequence: the Bacillus subtilis 168 reference genome a decade later.</title>
        <authorList>
            <person name="Barbe V."/>
            <person name="Cruveiller S."/>
            <person name="Kunst F."/>
            <person name="Lenoble P."/>
            <person name="Meurice G."/>
            <person name="Sekowska A."/>
            <person name="Vallenet D."/>
            <person name="Wang T."/>
            <person name="Moszer I."/>
            <person name="Medigue C."/>
            <person name="Danchin A."/>
        </authorList>
    </citation>
    <scope>SEQUENCE REVISION TO C-TERMINUS</scope>
</reference>
<sequence>MFPILETDRLILRQITDQDAEAIFACFSNDEVTRYYGLENMESIEQAISMIQTFAALYQEKRGIRWGIERRDTKELIGTIGFHALAQKHRRAEIGYEIIPEHWRNGFASEVISKVVSYGFSALGLSRIGAVVFTDNEASNRLLLKMGFQKEGVLRQYMYQNGTPYDTNVYSIVKPRE</sequence>
<evidence type="ECO:0000255" key="1">
    <source>
        <dbReference type="PROSITE-ProRule" id="PRU00532"/>
    </source>
</evidence>
<evidence type="ECO:0000305" key="2"/>
<proteinExistence type="inferred from homology"/>
<keyword id="KW-0012">Acyltransferase</keyword>
<keyword id="KW-1185">Reference proteome</keyword>
<keyword id="KW-0808">Transferase</keyword>